<feature type="chain" id="PRO_1000011372" description="3-methyl-2-oxobutanoate hydroxymethyltransferase">
    <location>
        <begin position="1"/>
        <end position="263"/>
    </location>
</feature>
<feature type="active site" description="Proton acceptor" evidence="1">
    <location>
        <position position="180"/>
    </location>
</feature>
<feature type="binding site" evidence="1">
    <location>
        <begin position="45"/>
        <end position="46"/>
    </location>
    <ligand>
        <name>3-methyl-2-oxobutanoate</name>
        <dbReference type="ChEBI" id="CHEBI:11851"/>
    </ligand>
</feature>
<feature type="binding site" evidence="1">
    <location>
        <position position="45"/>
    </location>
    <ligand>
        <name>Mg(2+)</name>
        <dbReference type="ChEBI" id="CHEBI:18420"/>
    </ligand>
</feature>
<feature type="binding site" evidence="1">
    <location>
        <position position="84"/>
    </location>
    <ligand>
        <name>3-methyl-2-oxobutanoate</name>
        <dbReference type="ChEBI" id="CHEBI:11851"/>
    </ligand>
</feature>
<feature type="binding site" evidence="1">
    <location>
        <position position="84"/>
    </location>
    <ligand>
        <name>Mg(2+)</name>
        <dbReference type="ChEBI" id="CHEBI:18420"/>
    </ligand>
</feature>
<feature type="binding site" evidence="1">
    <location>
        <position position="112"/>
    </location>
    <ligand>
        <name>3-methyl-2-oxobutanoate</name>
        <dbReference type="ChEBI" id="CHEBI:11851"/>
    </ligand>
</feature>
<feature type="binding site" evidence="1">
    <location>
        <position position="114"/>
    </location>
    <ligand>
        <name>Mg(2+)</name>
        <dbReference type="ChEBI" id="CHEBI:18420"/>
    </ligand>
</feature>
<comment type="function">
    <text evidence="1">Catalyzes the reversible reaction in which hydroxymethyl group from 5,10-methylenetetrahydrofolate is transferred onto alpha-ketoisovalerate to form ketopantoate.</text>
</comment>
<comment type="catalytic activity">
    <reaction evidence="1">
        <text>3-methyl-2-oxobutanoate + (6R)-5,10-methylene-5,6,7,8-tetrahydrofolate + H2O = 2-dehydropantoate + (6S)-5,6,7,8-tetrahydrofolate</text>
        <dbReference type="Rhea" id="RHEA:11824"/>
        <dbReference type="ChEBI" id="CHEBI:11561"/>
        <dbReference type="ChEBI" id="CHEBI:11851"/>
        <dbReference type="ChEBI" id="CHEBI:15377"/>
        <dbReference type="ChEBI" id="CHEBI:15636"/>
        <dbReference type="ChEBI" id="CHEBI:57453"/>
        <dbReference type="EC" id="2.1.2.11"/>
    </reaction>
</comment>
<comment type="cofactor">
    <cofactor evidence="1">
        <name>Mg(2+)</name>
        <dbReference type="ChEBI" id="CHEBI:18420"/>
    </cofactor>
    <text evidence="1">Binds 1 Mg(2+) ion per subunit.</text>
</comment>
<comment type="pathway">
    <text evidence="1">Cofactor biosynthesis; (R)-pantothenate biosynthesis; (R)-pantoate from 3-methyl-2-oxobutanoate: step 1/2.</text>
</comment>
<comment type="subunit">
    <text evidence="1">Homodecamer; pentamer of dimers.</text>
</comment>
<comment type="subcellular location">
    <subcellularLocation>
        <location evidence="1">Cytoplasm</location>
    </subcellularLocation>
</comment>
<comment type="similarity">
    <text evidence="1">Belongs to the PanB family.</text>
</comment>
<protein>
    <recommendedName>
        <fullName evidence="1">3-methyl-2-oxobutanoate hydroxymethyltransferase</fullName>
        <ecNumber evidence="1">2.1.2.11</ecNumber>
    </recommendedName>
    <alternativeName>
        <fullName evidence="1">Ketopantoate hydroxymethyltransferase</fullName>
        <shortName evidence="1">KPHMT</shortName>
    </alternativeName>
</protein>
<dbReference type="EC" id="2.1.2.11" evidence="1"/>
<dbReference type="EMBL" id="CP000647">
    <property type="protein sequence ID" value="ABR75601.1"/>
    <property type="molecule type" value="Genomic_DNA"/>
</dbReference>
<dbReference type="RefSeq" id="WP_002888841.1">
    <property type="nucleotide sequence ID" value="NC_009648.1"/>
</dbReference>
<dbReference type="SMR" id="A6T4T0"/>
<dbReference type="STRING" id="272620.KPN_00141"/>
<dbReference type="PaxDb" id="272620-KPN_00141"/>
<dbReference type="EnsemblBacteria" id="ABR75601">
    <property type="protein sequence ID" value="ABR75601"/>
    <property type="gene ID" value="KPN_00141"/>
</dbReference>
<dbReference type="KEGG" id="kpn:KPN_00141"/>
<dbReference type="HOGENOM" id="CLU_036645_1_0_6"/>
<dbReference type="UniPathway" id="UPA00028">
    <property type="reaction ID" value="UER00003"/>
</dbReference>
<dbReference type="Proteomes" id="UP000000265">
    <property type="component" value="Chromosome"/>
</dbReference>
<dbReference type="GO" id="GO:0005737">
    <property type="term" value="C:cytoplasm"/>
    <property type="evidence" value="ECO:0007669"/>
    <property type="project" value="UniProtKB-SubCell"/>
</dbReference>
<dbReference type="GO" id="GO:0003864">
    <property type="term" value="F:3-methyl-2-oxobutanoate hydroxymethyltransferase activity"/>
    <property type="evidence" value="ECO:0007669"/>
    <property type="project" value="UniProtKB-UniRule"/>
</dbReference>
<dbReference type="GO" id="GO:0000287">
    <property type="term" value="F:magnesium ion binding"/>
    <property type="evidence" value="ECO:0007669"/>
    <property type="project" value="TreeGrafter"/>
</dbReference>
<dbReference type="GO" id="GO:0015940">
    <property type="term" value="P:pantothenate biosynthetic process"/>
    <property type="evidence" value="ECO:0007669"/>
    <property type="project" value="UniProtKB-UniRule"/>
</dbReference>
<dbReference type="CDD" id="cd06557">
    <property type="entry name" value="KPHMT-like"/>
    <property type="match status" value="1"/>
</dbReference>
<dbReference type="FunFam" id="3.20.20.60:FF:000003">
    <property type="entry name" value="3-methyl-2-oxobutanoate hydroxymethyltransferase"/>
    <property type="match status" value="1"/>
</dbReference>
<dbReference type="Gene3D" id="3.20.20.60">
    <property type="entry name" value="Phosphoenolpyruvate-binding domains"/>
    <property type="match status" value="1"/>
</dbReference>
<dbReference type="HAMAP" id="MF_00156">
    <property type="entry name" value="PanB"/>
    <property type="match status" value="1"/>
</dbReference>
<dbReference type="InterPro" id="IPR003700">
    <property type="entry name" value="Pantoate_hydroxy_MeTrfase"/>
</dbReference>
<dbReference type="InterPro" id="IPR015813">
    <property type="entry name" value="Pyrv/PenolPyrv_kinase-like_dom"/>
</dbReference>
<dbReference type="InterPro" id="IPR040442">
    <property type="entry name" value="Pyrv_kinase-like_dom_sf"/>
</dbReference>
<dbReference type="NCBIfam" id="TIGR00222">
    <property type="entry name" value="panB"/>
    <property type="match status" value="1"/>
</dbReference>
<dbReference type="NCBIfam" id="NF001452">
    <property type="entry name" value="PRK00311.1"/>
    <property type="match status" value="1"/>
</dbReference>
<dbReference type="PANTHER" id="PTHR20881">
    <property type="entry name" value="3-METHYL-2-OXOBUTANOATE HYDROXYMETHYLTRANSFERASE"/>
    <property type="match status" value="1"/>
</dbReference>
<dbReference type="PANTHER" id="PTHR20881:SF0">
    <property type="entry name" value="3-METHYL-2-OXOBUTANOATE HYDROXYMETHYLTRANSFERASE"/>
    <property type="match status" value="1"/>
</dbReference>
<dbReference type="Pfam" id="PF02548">
    <property type="entry name" value="Pantoate_transf"/>
    <property type="match status" value="1"/>
</dbReference>
<dbReference type="PIRSF" id="PIRSF000388">
    <property type="entry name" value="Pantoate_hydroxy_MeTrfase"/>
    <property type="match status" value="1"/>
</dbReference>
<dbReference type="SUPFAM" id="SSF51621">
    <property type="entry name" value="Phosphoenolpyruvate/pyruvate domain"/>
    <property type="match status" value="1"/>
</dbReference>
<keyword id="KW-0963">Cytoplasm</keyword>
<keyword id="KW-0460">Magnesium</keyword>
<keyword id="KW-0479">Metal-binding</keyword>
<keyword id="KW-0566">Pantothenate biosynthesis</keyword>
<keyword id="KW-0808">Transferase</keyword>
<organism>
    <name type="scientific">Klebsiella pneumoniae subsp. pneumoniae (strain ATCC 700721 / MGH 78578)</name>
    <dbReference type="NCBI Taxonomy" id="272620"/>
    <lineage>
        <taxon>Bacteria</taxon>
        <taxon>Pseudomonadati</taxon>
        <taxon>Pseudomonadota</taxon>
        <taxon>Gammaproteobacteria</taxon>
        <taxon>Enterobacterales</taxon>
        <taxon>Enterobacteriaceae</taxon>
        <taxon>Klebsiella/Raoultella group</taxon>
        <taxon>Klebsiella</taxon>
        <taxon>Klebsiella pneumoniae complex</taxon>
    </lineage>
</organism>
<accession>A6T4T0</accession>
<name>PANB_KLEP7</name>
<reference key="1">
    <citation type="submission" date="2006-09" db="EMBL/GenBank/DDBJ databases">
        <authorList>
            <consortium name="The Klebsiella pneumonia Genome Sequencing Project"/>
            <person name="McClelland M."/>
            <person name="Sanderson E.K."/>
            <person name="Spieth J."/>
            <person name="Clifton W.S."/>
            <person name="Latreille P."/>
            <person name="Sabo A."/>
            <person name="Pepin K."/>
            <person name="Bhonagiri V."/>
            <person name="Porwollik S."/>
            <person name="Ali J."/>
            <person name="Wilson R.K."/>
        </authorList>
    </citation>
    <scope>NUCLEOTIDE SEQUENCE [LARGE SCALE GENOMIC DNA]</scope>
    <source>
        <strain>ATCC 700721 / MGH 78578</strain>
    </source>
</reference>
<sequence length="263" mass="28027">MKPTTIALLQKCKQEKKRFATITAYDHSFAKLFADEGINVLLVGDSLGMTVQGHDSTLPVTVEDIAYHTRAVRRGAPNSLLLADLPFMAYATPEQTFANAAIVMRAGANMVKLEGGAWLADTVRMLAERAVPVCGHLGLTPQSVNVFGGYKVQGRGDAAQTLFEDALALEAAGAQLLVLECVPVELAKRITDALTIPVIGIGAGNVTDGQILVMHDAFGITGGHIPKFAKNFLAEAGDIRAAVRQYIAEVESGVYPGEEHSFH</sequence>
<proteinExistence type="inferred from homology"/>
<gene>
    <name evidence="1" type="primary">panB</name>
    <name type="ordered locus">KPN78578_01400</name>
    <name type="ORF">KPN_00141</name>
</gene>
<evidence type="ECO:0000255" key="1">
    <source>
        <dbReference type="HAMAP-Rule" id="MF_00156"/>
    </source>
</evidence>